<comment type="function">
    <text evidence="1">Negatively regulates the transcription of the flagellar master operon flhDC by binding to the upstream region of the operon.</text>
</comment>
<comment type="similarity">
    <text evidence="2">Belongs to the LysR transcriptional regulatory family.</text>
</comment>
<evidence type="ECO:0000255" key="1">
    <source>
        <dbReference type="HAMAP-Rule" id="MF_01233"/>
    </source>
</evidence>
<evidence type="ECO:0000305" key="2"/>
<proteinExistence type="inferred from homology"/>
<sequence length="293" mass="33933">MDTELLKTFLEVSRTRHFGRAAESLYLTQSAVSFRIRQLENQLGANLFTRHRNNIRLTPAGERLVPYAEMLLNTWRLAKKEVIHSLQHTELSIGATASLWEAYLTPWLQQLYEQQEELRLEARIALRNSLVKQLHERQLDLLITTEPPKMDELACLLLGHFSLRLYSSFSLDLPKEDDTPNEHKNASEVPYIKLEWGADFHQQENRLLDSEQAPILTTTSAHLTRQLLETTGGCAFLPEHWQKEYPQLVIHPDIPPIVRPLYAVWLQNSDQQALIRQLLKTPMNNATQSVTRE</sequence>
<protein>
    <recommendedName>
        <fullName evidence="1">HTH-type transcriptional regulator HdfR</fullName>
    </recommendedName>
    <alternativeName>
        <fullName evidence="1">H-NS-dependent flhDC regulator</fullName>
    </alternativeName>
</protein>
<gene>
    <name evidence="1" type="primary">hdfR</name>
    <name type="ordered locus">YPTS_0140</name>
</gene>
<keyword id="KW-0238">DNA-binding</keyword>
<keyword id="KW-0678">Repressor</keyword>
<keyword id="KW-0804">Transcription</keyword>
<keyword id="KW-0805">Transcription regulation</keyword>
<feature type="chain" id="PRO_1000139678" description="HTH-type transcriptional regulator HdfR">
    <location>
        <begin position="1"/>
        <end position="293"/>
    </location>
</feature>
<feature type="domain" description="HTH lysR-type" evidence="1">
    <location>
        <begin position="1"/>
        <end position="58"/>
    </location>
</feature>
<feature type="DNA-binding region" description="H-T-H motif" evidence="1">
    <location>
        <begin position="18"/>
        <end position="37"/>
    </location>
</feature>
<name>HDFR_YERPB</name>
<reference key="1">
    <citation type="submission" date="2008-04" db="EMBL/GenBank/DDBJ databases">
        <title>Complete sequence of Yersinia pseudotuberculosis PB1/+.</title>
        <authorList>
            <person name="Copeland A."/>
            <person name="Lucas S."/>
            <person name="Lapidus A."/>
            <person name="Glavina del Rio T."/>
            <person name="Dalin E."/>
            <person name="Tice H."/>
            <person name="Bruce D."/>
            <person name="Goodwin L."/>
            <person name="Pitluck S."/>
            <person name="Munk A.C."/>
            <person name="Brettin T."/>
            <person name="Detter J.C."/>
            <person name="Han C."/>
            <person name="Tapia R."/>
            <person name="Schmutz J."/>
            <person name="Larimer F."/>
            <person name="Land M."/>
            <person name="Hauser L."/>
            <person name="Challacombe J.F."/>
            <person name="Green L."/>
            <person name="Lindler L.E."/>
            <person name="Nikolich M.P."/>
            <person name="Richardson P."/>
        </authorList>
    </citation>
    <scope>NUCLEOTIDE SEQUENCE [LARGE SCALE GENOMIC DNA]</scope>
    <source>
        <strain>PB1/+</strain>
    </source>
</reference>
<accession>B2JZG4</accession>
<dbReference type="EMBL" id="CP001048">
    <property type="protein sequence ID" value="ACC87137.1"/>
    <property type="molecule type" value="Genomic_DNA"/>
</dbReference>
<dbReference type="RefSeq" id="WP_002212020.1">
    <property type="nucleotide sequence ID" value="NZ_CP009780.1"/>
</dbReference>
<dbReference type="SMR" id="B2JZG4"/>
<dbReference type="GeneID" id="57974802"/>
<dbReference type="KEGG" id="ypb:YPTS_0140"/>
<dbReference type="PATRIC" id="fig|502801.10.peg.3815"/>
<dbReference type="GO" id="GO:0003677">
    <property type="term" value="F:DNA binding"/>
    <property type="evidence" value="ECO:0007669"/>
    <property type="project" value="UniProtKB-KW"/>
</dbReference>
<dbReference type="GO" id="GO:0003700">
    <property type="term" value="F:DNA-binding transcription factor activity"/>
    <property type="evidence" value="ECO:0007669"/>
    <property type="project" value="UniProtKB-UniRule"/>
</dbReference>
<dbReference type="GO" id="GO:0045892">
    <property type="term" value="P:negative regulation of DNA-templated transcription"/>
    <property type="evidence" value="ECO:0007669"/>
    <property type="project" value="UniProtKB-UniRule"/>
</dbReference>
<dbReference type="CDD" id="cd05466">
    <property type="entry name" value="PBP2_LTTR_substrate"/>
    <property type="match status" value="1"/>
</dbReference>
<dbReference type="FunFam" id="1.10.10.10:FF:000001">
    <property type="entry name" value="LysR family transcriptional regulator"/>
    <property type="match status" value="1"/>
</dbReference>
<dbReference type="Gene3D" id="3.40.190.10">
    <property type="entry name" value="Periplasmic binding protein-like II"/>
    <property type="match status" value="2"/>
</dbReference>
<dbReference type="Gene3D" id="1.10.10.10">
    <property type="entry name" value="Winged helix-like DNA-binding domain superfamily/Winged helix DNA-binding domain"/>
    <property type="match status" value="1"/>
</dbReference>
<dbReference type="HAMAP" id="MF_01233">
    <property type="entry name" value="HTH_type_HdfR"/>
    <property type="match status" value="1"/>
</dbReference>
<dbReference type="InterPro" id="IPR050176">
    <property type="entry name" value="LTTR"/>
</dbReference>
<dbReference type="InterPro" id="IPR005119">
    <property type="entry name" value="LysR_subst-bd"/>
</dbReference>
<dbReference type="InterPro" id="IPR020890">
    <property type="entry name" value="Tscrpt_reg_HTH_HdfR"/>
</dbReference>
<dbReference type="InterPro" id="IPR000847">
    <property type="entry name" value="Tscrpt_reg_HTH_LysR"/>
</dbReference>
<dbReference type="InterPro" id="IPR036388">
    <property type="entry name" value="WH-like_DNA-bd_sf"/>
</dbReference>
<dbReference type="InterPro" id="IPR036390">
    <property type="entry name" value="WH_DNA-bd_sf"/>
</dbReference>
<dbReference type="NCBIfam" id="NF002946">
    <property type="entry name" value="PRK03601.1"/>
    <property type="match status" value="1"/>
</dbReference>
<dbReference type="PANTHER" id="PTHR30579:SF8">
    <property type="entry name" value="HTH-TYPE TRANSCRIPTIONAL REGULATOR HDFR"/>
    <property type="match status" value="1"/>
</dbReference>
<dbReference type="PANTHER" id="PTHR30579">
    <property type="entry name" value="TRANSCRIPTIONAL REGULATOR"/>
    <property type="match status" value="1"/>
</dbReference>
<dbReference type="Pfam" id="PF00126">
    <property type="entry name" value="HTH_1"/>
    <property type="match status" value="1"/>
</dbReference>
<dbReference type="Pfam" id="PF03466">
    <property type="entry name" value="LysR_substrate"/>
    <property type="match status" value="1"/>
</dbReference>
<dbReference type="PRINTS" id="PR00039">
    <property type="entry name" value="HTHLYSR"/>
</dbReference>
<dbReference type="SUPFAM" id="SSF53850">
    <property type="entry name" value="Periplasmic binding protein-like II"/>
    <property type="match status" value="1"/>
</dbReference>
<dbReference type="SUPFAM" id="SSF46785">
    <property type="entry name" value="Winged helix' DNA-binding domain"/>
    <property type="match status" value="1"/>
</dbReference>
<dbReference type="PROSITE" id="PS50931">
    <property type="entry name" value="HTH_LYSR"/>
    <property type="match status" value="1"/>
</dbReference>
<organism>
    <name type="scientific">Yersinia pseudotuberculosis serotype IB (strain PB1/+)</name>
    <dbReference type="NCBI Taxonomy" id="502801"/>
    <lineage>
        <taxon>Bacteria</taxon>
        <taxon>Pseudomonadati</taxon>
        <taxon>Pseudomonadota</taxon>
        <taxon>Gammaproteobacteria</taxon>
        <taxon>Enterobacterales</taxon>
        <taxon>Yersiniaceae</taxon>
        <taxon>Yersinia</taxon>
    </lineage>
</organism>